<geneLocation type="chloroplast"/>
<feature type="chain" id="PRO_0000062373" description="Ribulose bisphosphate carboxylase large chain">
    <location>
        <begin position="1" status="less than"/>
        <end position="441" status="greater than"/>
    </location>
</feature>
<feature type="active site" description="Proton acceptor" evidence="1">
    <location>
        <position position="166"/>
    </location>
</feature>
<feature type="active site" description="Proton acceptor" evidence="1">
    <location>
        <position position="285"/>
    </location>
</feature>
<feature type="binding site" description="in homodimeric partner" evidence="1">
    <location>
        <position position="114"/>
    </location>
    <ligand>
        <name>substrate</name>
    </ligand>
</feature>
<feature type="binding site" evidence="1">
    <location>
        <position position="164"/>
    </location>
    <ligand>
        <name>substrate</name>
    </ligand>
</feature>
<feature type="binding site" evidence="1">
    <location>
        <position position="168"/>
    </location>
    <ligand>
        <name>substrate</name>
    </ligand>
</feature>
<feature type="binding site" description="via carbamate group" evidence="1">
    <location>
        <position position="192"/>
    </location>
    <ligand>
        <name>Mg(2+)</name>
        <dbReference type="ChEBI" id="CHEBI:18420"/>
    </ligand>
</feature>
<feature type="binding site" evidence="1">
    <location>
        <position position="194"/>
    </location>
    <ligand>
        <name>Mg(2+)</name>
        <dbReference type="ChEBI" id="CHEBI:18420"/>
    </ligand>
</feature>
<feature type="binding site" evidence="1">
    <location>
        <position position="195"/>
    </location>
    <ligand>
        <name>Mg(2+)</name>
        <dbReference type="ChEBI" id="CHEBI:18420"/>
    </ligand>
</feature>
<feature type="binding site" evidence="1">
    <location>
        <position position="286"/>
    </location>
    <ligand>
        <name>substrate</name>
    </ligand>
</feature>
<feature type="binding site" evidence="1">
    <location>
        <position position="318"/>
    </location>
    <ligand>
        <name>substrate</name>
    </ligand>
</feature>
<feature type="binding site" evidence="1">
    <location>
        <position position="370"/>
    </location>
    <ligand>
        <name>substrate</name>
    </ligand>
</feature>
<feature type="site" description="Transition state stabilizer" evidence="1">
    <location>
        <position position="325"/>
    </location>
</feature>
<feature type="modified residue" description="N6,N6,N6-trimethyllysine" evidence="1">
    <location>
        <position position="5"/>
    </location>
</feature>
<feature type="modified residue" description="N6-carboxylysine" evidence="1">
    <location>
        <position position="192"/>
    </location>
</feature>
<feature type="disulfide bond" description="Interchain; in linked form" evidence="1">
    <location>
        <position position="238"/>
    </location>
</feature>
<feature type="non-terminal residue">
    <location>
        <position position="1"/>
    </location>
</feature>
<feature type="non-terminal residue">
    <location>
        <position position="441"/>
    </location>
</feature>
<proteinExistence type="inferred from homology"/>
<protein>
    <recommendedName>
        <fullName evidence="1">Ribulose bisphosphate carboxylase large chain</fullName>
        <shortName evidence="1">RuBisCO large subunit</shortName>
        <ecNumber evidence="1">4.1.1.39</ecNumber>
    </recommendedName>
</protein>
<evidence type="ECO:0000255" key="1">
    <source>
        <dbReference type="HAMAP-Rule" id="MF_01338"/>
    </source>
</evidence>
<name>RBL_BEGMS</name>
<gene>
    <name evidence="1" type="primary">rbcL</name>
</gene>
<reference key="1">
    <citation type="journal article" date="1992" name="Science">
        <title>Carnivorous plants: phylogeny and structural evolution.</title>
        <authorList>
            <person name="Albert V.A."/>
            <person name="Williams S.E."/>
            <person name="Chase M.W."/>
        </authorList>
    </citation>
    <scope>NUCLEOTIDE SEQUENCE [GENOMIC DNA]</scope>
</reference>
<dbReference type="EC" id="4.1.1.39" evidence="1"/>
<dbReference type="EMBL" id="L01888">
    <property type="protein sequence ID" value="AAA86845.2"/>
    <property type="molecule type" value="Genomic_DNA"/>
</dbReference>
<dbReference type="EMBL" id="L12670">
    <property type="protein sequence ID" value="AAA88838.1"/>
    <property type="molecule type" value="Genomic_DNA"/>
</dbReference>
<dbReference type="SMR" id="P28383"/>
<dbReference type="GO" id="GO:0009507">
    <property type="term" value="C:chloroplast"/>
    <property type="evidence" value="ECO:0007669"/>
    <property type="project" value="UniProtKB-SubCell"/>
</dbReference>
<dbReference type="GO" id="GO:0000287">
    <property type="term" value="F:magnesium ion binding"/>
    <property type="evidence" value="ECO:0007669"/>
    <property type="project" value="InterPro"/>
</dbReference>
<dbReference type="GO" id="GO:0004497">
    <property type="term" value="F:monooxygenase activity"/>
    <property type="evidence" value="ECO:0007669"/>
    <property type="project" value="UniProtKB-KW"/>
</dbReference>
<dbReference type="GO" id="GO:0016984">
    <property type="term" value="F:ribulose-bisphosphate carboxylase activity"/>
    <property type="evidence" value="ECO:0007669"/>
    <property type="project" value="UniProtKB-EC"/>
</dbReference>
<dbReference type="GO" id="GO:0009853">
    <property type="term" value="P:photorespiration"/>
    <property type="evidence" value="ECO:0007669"/>
    <property type="project" value="UniProtKB-KW"/>
</dbReference>
<dbReference type="GO" id="GO:0019253">
    <property type="term" value="P:reductive pentose-phosphate cycle"/>
    <property type="evidence" value="ECO:0007669"/>
    <property type="project" value="UniProtKB-KW"/>
</dbReference>
<dbReference type="CDD" id="cd08212">
    <property type="entry name" value="RuBisCO_large_I"/>
    <property type="match status" value="1"/>
</dbReference>
<dbReference type="FunFam" id="3.20.20.110:FF:000003">
    <property type="entry name" value="Ribulose bisphosphate carboxylase large chain"/>
    <property type="match status" value="1"/>
</dbReference>
<dbReference type="FunFam" id="3.30.70.150:FF:000001">
    <property type="entry name" value="Ribulose bisphosphate carboxylase large chain"/>
    <property type="match status" value="1"/>
</dbReference>
<dbReference type="Gene3D" id="3.20.20.110">
    <property type="entry name" value="Ribulose bisphosphate carboxylase, large subunit, C-terminal domain"/>
    <property type="match status" value="1"/>
</dbReference>
<dbReference type="Gene3D" id="3.30.70.150">
    <property type="entry name" value="RuBisCO large subunit, N-terminal domain"/>
    <property type="match status" value="1"/>
</dbReference>
<dbReference type="HAMAP" id="MF_01338">
    <property type="entry name" value="RuBisCO_L_type1"/>
    <property type="match status" value="1"/>
</dbReference>
<dbReference type="InterPro" id="IPR033966">
    <property type="entry name" value="RuBisCO"/>
</dbReference>
<dbReference type="InterPro" id="IPR020878">
    <property type="entry name" value="RuBisCo_large_chain_AS"/>
</dbReference>
<dbReference type="InterPro" id="IPR000685">
    <property type="entry name" value="RuBisCO_lsu_C"/>
</dbReference>
<dbReference type="InterPro" id="IPR036376">
    <property type="entry name" value="RuBisCO_lsu_C_sf"/>
</dbReference>
<dbReference type="InterPro" id="IPR017443">
    <property type="entry name" value="RuBisCO_lsu_fd_N"/>
</dbReference>
<dbReference type="InterPro" id="IPR036422">
    <property type="entry name" value="RuBisCO_lsu_N_sf"/>
</dbReference>
<dbReference type="InterPro" id="IPR020888">
    <property type="entry name" value="RuBisCO_lsuI"/>
</dbReference>
<dbReference type="NCBIfam" id="NF003252">
    <property type="entry name" value="PRK04208.1"/>
    <property type="match status" value="1"/>
</dbReference>
<dbReference type="PANTHER" id="PTHR42704">
    <property type="entry name" value="RIBULOSE BISPHOSPHATE CARBOXYLASE"/>
    <property type="match status" value="1"/>
</dbReference>
<dbReference type="PANTHER" id="PTHR42704:SF15">
    <property type="entry name" value="RIBULOSE BISPHOSPHATE CARBOXYLASE LARGE CHAIN"/>
    <property type="match status" value="1"/>
</dbReference>
<dbReference type="Pfam" id="PF00016">
    <property type="entry name" value="RuBisCO_large"/>
    <property type="match status" value="1"/>
</dbReference>
<dbReference type="Pfam" id="PF02788">
    <property type="entry name" value="RuBisCO_large_N"/>
    <property type="match status" value="1"/>
</dbReference>
<dbReference type="SFLD" id="SFLDG01052">
    <property type="entry name" value="RuBisCO"/>
    <property type="match status" value="1"/>
</dbReference>
<dbReference type="SFLD" id="SFLDS00014">
    <property type="entry name" value="RuBisCO"/>
    <property type="match status" value="1"/>
</dbReference>
<dbReference type="SFLD" id="SFLDG00301">
    <property type="entry name" value="RuBisCO-like_proteins"/>
    <property type="match status" value="1"/>
</dbReference>
<dbReference type="SUPFAM" id="SSF51649">
    <property type="entry name" value="RuBisCo, C-terminal domain"/>
    <property type="match status" value="1"/>
</dbReference>
<dbReference type="SUPFAM" id="SSF54966">
    <property type="entry name" value="RuBisCO, large subunit, small (N-terminal) domain"/>
    <property type="match status" value="1"/>
</dbReference>
<dbReference type="PROSITE" id="PS00157">
    <property type="entry name" value="RUBISCO_LARGE"/>
    <property type="match status" value="1"/>
</dbReference>
<keyword id="KW-0113">Calvin cycle</keyword>
<keyword id="KW-0120">Carbon dioxide fixation</keyword>
<keyword id="KW-0150">Chloroplast</keyword>
<keyword id="KW-1015">Disulfide bond</keyword>
<keyword id="KW-0456">Lyase</keyword>
<keyword id="KW-0460">Magnesium</keyword>
<keyword id="KW-0479">Metal-binding</keyword>
<keyword id="KW-0488">Methylation</keyword>
<keyword id="KW-0503">Monooxygenase</keyword>
<keyword id="KW-0560">Oxidoreductase</keyword>
<keyword id="KW-0601">Photorespiration</keyword>
<keyword id="KW-0602">Photosynthesis</keyword>
<keyword id="KW-0934">Plastid</keyword>
<comment type="function">
    <text evidence="1">RuBisCO catalyzes two reactions: the carboxylation of D-ribulose 1,5-bisphosphate, the primary event in carbon dioxide fixation, as well as the oxidative fragmentation of the pentose substrate in the photorespiration process. Both reactions occur simultaneously and in competition at the same active site.</text>
</comment>
<comment type="catalytic activity">
    <reaction evidence="1">
        <text>2 (2R)-3-phosphoglycerate + 2 H(+) = D-ribulose 1,5-bisphosphate + CO2 + H2O</text>
        <dbReference type="Rhea" id="RHEA:23124"/>
        <dbReference type="ChEBI" id="CHEBI:15377"/>
        <dbReference type="ChEBI" id="CHEBI:15378"/>
        <dbReference type="ChEBI" id="CHEBI:16526"/>
        <dbReference type="ChEBI" id="CHEBI:57870"/>
        <dbReference type="ChEBI" id="CHEBI:58272"/>
        <dbReference type="EC" id="4.1.1.39"/>
    </reaction>
</comment>
<comment type="catalytic activity">
    <reaction evidence="1">
        <text>D-ribulose 1,5-bisphosphate + O2 = 2-phosphoglycolate + (2R)-3-phosphoglycerate + 2 H(+)</text>
        <dbReference type="Rhea" id="RHEA:36631"/>
        <dbReference type="ChEBI" id="CHEBI:15378"/>
        <dbReference type="ChEBI" id="CHEBI:15379"/>
        <dbReference type="ChEBI" id="CHEBI:57870"/>
        <dbReference type="ChEBI" id="CHEBI:58033"/>
        <dbReference type="ChEBI" id="CHEBI:58272"/>
    </reaction>
</comment>
<comment type="cofactor">
    <cofactor evidence="1">
        <name>Mg(2+)</name>
        <dbReference type="ChEBI" id="CHEBI:18420"/>
    </cofactor>
    <text evidence="1">Binds 1 Mg(2+) ion per subunit.</text>
</comment>
<comment type="subunit">
    <text evidence="1">Heterohexadecamer of 8 large chains and 8 small chains; disulfide-linked. The disulfide link is formed within the large subunit homodimers.</text>
</comment>
<comment type="subcellular location">
    <subcellularLocation>
        <location>Plastid</location>
        <location>Chloroplast</location>
    </subcellularLocation>
</comment>
<comment type="PTM">
    <text evidence="1">The disulfide bond which can form in the large chain dimeric partners within the hexadecamer appears to be associated with oxidative stress and protein turnover.</text>
</comment>
<comment type="miscellaneous">
    <text evidence="1">The basic functional RuBisCO is composed of a large chain homodimer in a 'head-to-tail' conformation. In form I RuBisCO this homodimer is arranged in a barrel-like tetramer with the small subunits forming a tetrameric 'cap' on each end of the 'barrel'.</text>
</comment>
<comment type="similarity">
    <text evidence="1">Belongs to the RuBisCO large chain family. Type I subfamily.</text>
</comment>
<organism>
    <name type="scientific">Begonia metallica x Begonia sanguinea</name>
    <dbReference type="NCBI Taxonomy" id="3682"/>
    <lineage>
        <taxon>Eukaryota</taxon>
        <taxon>Viridiplantae</taxon>
        <taxon>Streptophyta</taxon>
        <taxon>Embryophyta</taxon>
        <taxon>Tracheophyta</taxon>
        <taxon>Spermatophyta</taxon>
        <taxon>Magnoliopsida</taxon>
        <taxon>eudicotyledons</taxon>
        <taxon>Gunneridae</taxon>
        <taxon>Pentapetalae</taxon>
        <taxon>rosids</taxon>
        <taxon>fabids</taxon>
        <taxon>Cucurbitales</taxon>
        <taxon>Begoniaceae</taxon>
        <taxon>Begonia</taxon>
        <taxon>Begonia sect. Pritzelia</taxon>
    </lineage>
</organism>
<sequence length="441" mass="48799">SVGFKAGVKDYKLTYYTPAYQTKDTDILAAFRVSPQPGVPPEEAGAAVAAESSTGTWTTVWTDGLTSLDRYKGRCYYIEPVAGEENQYIAYVAYPLDLFEEGSVTNMFTSIVGNVFGFKALRALRLEDLRIPTAYVKTFQGPPHGIQVERDKLNKYGRPLLGCTIKPKLGLSAKNYGRAVYECLRGGLDFTKDDENVNSQPFMRWRDRFVFCAEALYKAQAETGEIKGHYLNATAGTCEEMNKRAVFARELGVPIIMHDYLTGGFTANTSLAHYCRDNGLLLHIHRAMHAVIDRQKNHGIHFRVLAKALRMSGGDHIHSGTVVGKLEGEREITLGFVDLLRDDYIEKDRDRGIYFTQDWVSLPGVLPVASGGIHVWHMPALTEIFGDDSVLQFGGGTLGHPWGNAPGGVANRVALEACVQARNEGRDLAREGNEIIREASK</sequence>
<accession>P28383</accession>